<protein>
    <recommendedName>
        <fullName>Toluene 1,2-dioxygenase system ferredoxin--NAD(+) reductase component</fullName>
        <ecNumber>1.18.1.3</ecNumber>
    </recommendedName>
</protein>
<sequence>MATHVAIIGNGVGGFTTAQALRAEGFEGRISLIGDEPHLPYDRPSLSKAVLDGSLERPPILAEADWYGEARIDMLTGPEVTALDVQTRTISLDDGTTLSADAIVIATGSRARTMALPGSQLPGVVTLRTYGDVQVLRDSWTSATRLLIVGGGLIGCEVATTARKLGLSVTILEAGDELLVRVLGRRIGAWLRGLLTELGVQVELGTGVVGFSGEGQLEQVMASDGRSFVADSALICVGAEPADQLARQAGLACDRGVIVDHCGATLAKGVFAVGDVASWPLRAGGRRSLETYMNAQRQAAAVAAAILGKNVSAPQLPVSWTEIAGHRMQMAGDIEGPGDFVSRGMPGSGAALLFRLQERRIQAVVAVDAPRDFALATRLVEARAAIEPARLADLSNSMRDFVRANEGDLT</sequence>
<comment type="function">
    <text>Part of the electron transfer component of toluene 1,2-dioxygenase, transfers electrons from ferredoxin (TodB) to NADH.</text>
</comment>
<comment type="catalytic activity">
    <reaction>
        <text>2 reduced [2Fe-2S]-[ferredoxin] + NAD(+) + H(+) = 2 oxidized [2Fe-2S]-[ferredoxin] + NADH</text>
        <dbReference type="Rhea" id="RHEA:16521"/>
        <dbReference type="Rhea" id="RHEA-COMP:10000"/>
        <dbReference type="Rhea" id="RHEA-COMP:10001"/>
        <dbReference type="ChEBI" id="CHEBI:15378"/>
        <dbReference type="ChEBI" id="CHEBI:33737"/>
        <dbReference type="ChEBI" id="CHEBI:33738"/>
        <dbReference type="ChEBI" id="CHEBI:57540"/>
        <dbReference type="ChEBI" id="CHEBI:57945"/>
        <dbReference type="EC" id="1.18.1.3"/>
    </reaction>
</comment>
<comment type="cofactor">
    <cofactor>
        <name>FAD</name>
        <dbReference type="ChEBI" id="CHEBI:57692"/>
    </cofactor>
</comment>
<comment type="pathway">
    <text>Xenobiotic degradation; toluene degradation.</text>
</comment>
<comment type="subunit">
    <text>This dioxygenase system consists of four proteins: the two subunits of the hydroxylase component (todC1 and todC2), a ferredoxin (TodB) and a ferredoxin reductase (TodA).</text>
</comment>
<comment type="similarity">
    <text evidence="3">Belongs to the bacterial ring-hydroxylating dioxygenase ferredoxin reductase family.</text>
</comment>
<dbReference type="EC" id="1.18.1.3"/>
<dbReference type="EMBL" id="J04996">
    <property type="protein sequence ID" value="AAA26008.1"/>
    <property type="molecule type" value="Genomic_DNA"/>
</dbReference>
<dbReference type="EMBL" id="CP000712">
    <property type="protein sequence ID" value="ABQ79009.1"/>
    <property type="molecule type" value="Genomic_DNA"/>
</dbReference>
<dbReference type="PIR" id="D36516">
    <property type="entry name" value="D36516"/>
</dbReference>
<dbReference type="PDB" id="3EF6">
    <property type="method" value="X-ray"/>
    <property type="resolution" value="1.80 A"/>
    <property type="chains" value="A=1-410"/>
</dbReference>
<dbReference type="PDB" id="4EMI">
    <property type="method" value="X-ray"/>
    <property type="resolution" value="1.81 A"/>
    <property type="chains" value="A=1-410"/>
</dbReference>
<dbReference type="PDB" id="4EMJ">
    <property type="method" value="X-ray"/>
    <property type="resolution" value="2.40 A"/>
    <property type="chains" value="A=1-410"/>
</dbReference>
<dbReference type="PDBsum" id="3EF6"/>
<dbReference type="PDBsum" id="4EMI"/>
<dbReference type="PDBsum" id="4EMJ"/>
<dbReference type="SMR" id="A5W4E9"/>
<dbReference type="KEGG" id="ppf:Pput_2878"/>
<dbReference type="eggNOG" id="COG1251">
    <property type="taxonomic scope" value="Bacteria"/>
</dbReference>
<dbReference type="HOGENOM" id="CLU_003291_4_0_6"/>
<dbReference type="BioCyc" id="MetaCyc:MONOMER-11350"/>
<dbReference type="UniPathway" id="UPA00273"/>
<dbReference type="EvolutionaryTrace" id="A5W4E9"/>
<dbReference type="GO" id="GO:0005737">
    <property type="term" value="C:cytoplasm"/>
    <property type="evidence" value="ECO:0007669"/>
    <property type="project" value="TreeGrafter"/>
</dbReference>
<dbReference type="GO" id="GO:0008860">
    <property type="term" value="F:ferredoxin-NAD+ reductase activity"/>
    <property type="evidence" value="ECO:0007669"/>
    <property type="project" value="UniProtKB-EC"/>
</dbReference>
<dbReference type="GO" id="GO:0016651">
    <property type="term" value="F:oxidoreductase activity, acting on NAD(P)H"/>
    <property type="evidence" value="ECO:0007669"/>
    <property type="project" value="TreeGrafter"/>
</dbReference>
<dbReference type="GO" id="GO:0042203">
    <property type="term" value="P:toluene catabolic process"/>
    <property type="evidence" value="ECO:0007669"/>
    <property type="project" value="UniProtKB-UniPathway"/>
</dbReference>
<dbReference type="Gene3D" id="3.30.390.30">
    <property type="match status" value="1"/>
</dbReference>
<dbReference type="Gene3D" id="3.50.50.60">
    <property type="entry name" value="FAD/NAD(P)-binding domain"/>
    <property type="match status" value="2"/>
</dbReference>
<dbReference type="InterPro" id="IPR050446">
    <property type="entry name" value="FAD-oxidoreductase/Apoptosis"/>
</dbReference>
<dbReference type="InterPro" id="IPR036188">
    <property type="entry name" value="FAD/NAD-bd_sf"/>
</dbReference>
<dbReference type="InterPro" id="IPR023753">
    <property type="entry name" value="FAD/NAD-binding_dom"/>
</dbReference>
<dbReference type="InterPro" id="IPR016156">
    <property type="entry name" value="FAD/NAD-linked_Rdtase_dimer_sf"/>
</dbReference>
<dbReference type="InterPro" id="IPR028202">
    <property type="entry name" value="Reductase_C"/>
</dbReference>
<dbReference type="PANTHER" id="PTHR43557">
    <property type="entry name" value="APOPTOSIS-INDUCING FACTOR 1"/>
    <property type="match status" value="1"/>
</dbReference>
<dbReference type="PANTHER" id="PTHR43557:SF2">
    <property type="entry name" value="RIESKE DOMAIN-CONTAINING PROTEIN-RELATED"/>
    <property type="match status" value="1"/>
</dbReference>
<dbReference type="Pfam" id="PF07992">
    <property type="entry name" value="Pyr_redox_2"/>
    <property type="match status" value="1"/>
</dbReference>
<dbReference type="Pfam" id="PF14759">
    <property type="entry name" value="Reductase_C"/>
    <property type="match status" value="1"/>
</dbReference>
<dbReference type="PRINTS" id="PR00368">
    <property type="entry name" value="FADPNR"/>
</dbReference>
<dbReference type="PRINTS" id="PR00411">
    <property type="entry name" value="PNDRDTASEI"/>
</dbReference>
<dbReference type="SUPFAM" id="SSF51905">
    <property type="entry name" value="FAD/NAD(P)-binding domain"/>
    <property type="match status" value="2"/>
</dbReference>
<dbReference type="SUPFAM" id="SSF55424">
    <property type="entry name" value="FAD/NAD-linked reductases, dimerisation (C-terminal) domain"/>
    <property type="match status" value="1"/>
</dbReference>
<accession>A5W4E9</accession>
<accession>P13452</accession>
<reference key="1">
    <citation type="journal article" date="1989" name="J. Biol. Chem.">
        <title>Toluene degradation by Pseudomonas putida F1. Nucleotide sequence of the todC1C2BADE genes and their expression in Escherichia coli.</title>
        <authorList>
            <person name="Zylstra G.J."/>
            <person name="Gibson D.T."/>
        </authorList>
    </citation>
    <scope>NUCLEOTIDE SEQUENCE [GENOMIC DNA]</scope>
    <scope>PROTEIN SEQUENCE OF 2-13</scope>
</reference>
<reference key="2">
    <citation type="submission" date="2007-05" db="EMBL/GenBank/DDBJ databases">
        <title>Complete sequence of Pseudomonas putida F1.</title>
        <authorList>
            <consortium name="US DOE Joint Genome Institute"/>
            <person name="Copeland A."/>
            <person name="Lucas S."/>
            <person name="Lapidus A."/>
            <person name="Barry K."/>
            <person name="Detter J.C."/>
            <person name="Glavina del Rio T."/>
            <person name="Hammon N."/>
            <person name="Israni S."/>
            <person name="Dalin E."/>
            <person name="Tice H."/>
            <person name="Pitluck S."/>
            <person name="Chain P."/>
            <person name="Malfatti S."/>
            <person name="Shin M."/>
            <person name="Vergez L."/>
            <person name="Schmutz J."/>
            <person name="Larimer F."/>
            <person name="Land M."/>
            <person name="Hauser L."/>
            <person name="Kyrpides N."/>
            <person name="Lykidis A."/>
            <person name="Parales R."/>
            <person name="Richardson P."/>
        </authorList>
    </citation>
    <scope>NUCLEOTIDE SEQUENCE [LARGE SCALE GENOMIC DNA]</scope>
    <source>
        <strain>ATCC 700007 / DSM 6899 / JCM 31910 / BCRC 17059 / LMG 24140 / F1</strain>
    </source>
</reference>
<gene>
    <name type="primary">todA</name>
    <name type="ordered locus">Pput_2878</name>
</gene>
<organism>
    <name type="scientific">Pseudomonas putida (strain ATCC 700007 / DSM 6899 / JCM 31910 / BCRC 17059 / LMG 24140 / F1)</name>
    <dbReference type="NCBI Taxonomy" id="351746"/>
    <lineage>
        <taxon>Bacteria</taxon>
        <taxon>Pseudomonadati</taxon>
        <taxon>Pseudomonadota</taxon>
        <taxon>Gammaproteobacteria</taxon>
        <taxon>Pseudomonadales</taxon>
        <taxon>Pseudomonadaceae</taxon>
        <taxon>Pseudomonas</taxon>
    </lineage>
</organism>
<proteinExistence type="evidence at protein level"/>
<keyword id="KW-0002">3D-structure</keyword>
<keyword id="KW-0058">Aromatic hydrocarbons catabolism</keyword>
<keyword id="KW-0903">Direct protein sequencing</keyword>
<keyword id="KW-0274">FAD</keyword>
<keyword id="KW-0285">Flavoprotein</keyword>
<keyword id="KW-0520">NAD</keyword>
<keyword id="KW-0560">Oxidoreductase</keyword>
<name>TODA_PSEP1</name>
<feature type="initiator methionine" description="Removed" evidence="2">
    <location>
        <position position="1"/>
    </location>
</feature>
<feature type="chain" id="PRO_0000314468" description="Toluene 1,2-dioxygenase system ferredoxin--NAD(+) reductase component">
    <location>
        <begin position="2"/>
        <end position="410"/>
    </location>
</feature>
<feature type="binding site" evidence="1">
    <location>
        <begin position="4"/>
        <end position="35"/>
    </location>
    <ligand>
        <name>FAD</name>
        <dbReference type="ChEBI" id="CHEBI:57692"/>
    </ligand>
</feature>
<feature type="binding site" evidence="1">
    <location>
        <begin position="145"/>
        <end position="173"/>
    </location>
    <ligand>
        <name>NAD(+)</name>
        <dbReference type="ChEBI" id="CHEBI:57540"/>
    </ligand>
</feature>
<feature type="strand" evidence="4">
    <location>
        <begin position="4"/>
        <end position="8"/>
    </location>
</feature>
<feature type="helix" evidence="4">
    <location>
        <begin position="12"/>
        <end position="23"/>
    </location>
</feature>
<feature type="strand" evidence="4">
    <location>
        <begin position="28"/>
        <end position="34"/>
    </location>
</feature>
<feature type="strand" evidence="4">
    <location>
        <begin position="36"/>
        <end position="41"/>
    </location>
</feature>
<feature type="helix" evidence="4">
    <location>
        <begin position="44"/>
        <end position="47"/>
    </location>
</feature>
<feature type="turn" evidence="4">
    <location>
        <begin position="48"/>
        <end position="53"/>
    </location>
</feature>
<feature type="strand" evidence="4">
    <location>
        <begin position="54"/>
        <end position="57"/>
    </location>
</feature>
<feature type="strand" evidence="4">
    <location>
        <begin position="60"/>
        <end position="62"/>
    </location>
</feature>
<feature type="helix" evidence="4">
    <location>
        <begin position="66"/>
        <end position="69"/>
    </location>
</feature>
<feature type="strand" evidence="4">
    <location>
        <begin position="73"/>
        <end position="77"/>
    </location>
</feature>
<feature type="strand" evidence="4">
    <location>
        <begin position="80"/>
        <end position="84"/>
    </location>
</feature>
<feature type="turn" evidence="4">
    <location>
        <begin position="85"/>
        <end position="88"/>
    </location>
</feature>
<feature type="strand" evidence="4">
    <location>
        <begin position="89"/>
        <end position="92"/>
    </location>
</feature>
<feature type="strand" evidence="4">
    <location>
        <begin position="97"/>
        <end position="99"/>
    </location>
</feature>
<feature type="strand" evidence="4">
    <location>
        <begin position="101"/>
        <end position="105"/>
    </location>
</feature>
<feature type="strand" evidence="4">
    <location>
        <begin position="109"/>
        <end position="111"/>
    </location>
</feature>
<feature type="turn" evidence="4">
    <location>
        <begin position="117"/>
        <end position="120"/>
    </location>
</feature>
<feature type="helix" evidence="4">
    <location>
        <begin position="130"/>
        <end position="139"/>
    </location>
</feature>
<feature type="strand" evidence="4">
    <location>
        <begin position="145"/>
        <end position="149"/>
    </location>
</feature>
<feature type="helix" evidence="4">
    <location>
        <begin position="153"/>
        <end position="164"/>
    </location>
</feature>
<feature type="strand" evidence="4">
    <location>
        <begin position="168"/>
        <end position="172"/>
    </location>
</feature>
<feature type="strand" evidence="4">
    <location>
        <begin position="174"/>
        <end position="179"/>
    </location>
</feature>
<feature type="helix" evidence="4">
    <location>
        <begin position="180"/>
        <end position="183"/>
    </location>
</feature>
<feature type="helix" evidence="4">
    <location>
        <begin position="185"/>
        <end position="198"/>
    </location>
</feature>
<feature type="strand" evidence="4">
    <location>
        <begin position="201"/>
        <end position="203"/>
    </location>
</feature>
<feature type="strand" evidence="4">
    <location>
        <begin position="208"/>
        <end position="212"/>
    </location>
</feature>
<feature type="strand" evidence="4">
    <location>
        <begin position="214"/>
        <end position="216"/>
    </location>
</feature>
<feature type="strand" evidence="4">
    <location>
        <begin position="219"/>
        <end position="222"/>
    </location>
</feature>
<feature type="strand" evidence="4">
    <location>
        <begin position="227"/>
        <end position="229"/>
    </location>
</feature>
<feature type="strand" evidence="4">
    <location>
        <begin position="231"/>
        <end position="235"/>
    </location>
</feature>
<feature type="strand" evidence="4">
    <location>
        <begin position="239"/>
        <end position="241"/>
    </location>
</feature>
<feature type="helix" evidence="4">
    <location>
        <begin position="244"/>
        <end position="248"/>
    </location>
</feature>
<feature type="strand" evidence="4">
    <location>
        <begin position="253"/>
        <end position="258"/>
    </location>
</feature>
<feature type="strand" evidence="4">
    <location>
        <begin position="270"/>
        <end position="272"/>
    </location>
</feature>
<feature type="helix" evidence="4">
    <location>
        <begin position="274"/>
        <end position="276"/>
    </location>
</feature>
<feature type="strand" evidence="4">
    <location>
        <begin position="277"/>
        <end position="281"/>
    </location>
</feature>
<feature type="strand" evidence="4">
    <location>
        <begin position="284"/>
        <end position="287"/>
    </location>
</feature>
<feature type="helix" evidence="4">
    <location>
        <begin position="292"/>
        <end position="306"/>
    </location>
</feature>
<feature type="strand" evidence="4">
    <location>
        <begin position="318"/>
        <end position="323"/>
    </location>
</feature>
<feature type="strand" evidence="4">
    <location>
        <begin position="326"/>
        <end position="332"/>
    </location>
</feature>
<feature type="strand" evidence="4">
    <location>
        <begin position="334"/>
        <end position="344"/>
    </location>
</feature>
<feature type="strand" evidence="4">
    <location>
        <begin position="348"/>
        <end position="357"/>
    </location>
</feature>
<feature type="strand" evidence="4">
    <location>
        <begin position="360"/>
        <end position="368"/>
    </location>
</feature>
<feature type="helix" evidence="4">
    <location>
        <begin position="370"/>
        <end position="382"/>
    </location>
</feature>
<feature type="helix" evidence="4">
    <location>
        <begin position="388"/>
        <end position="392"/>
    </location>
</feature>
<feature type="helix" evidence="4">
    <location>
        <begin position="398"/>
        <end position="400"/>
    </location>
</feature>
<evidence type="ECO:0000255" key="1"/>
<evidence type="ECO:0000269" key="2">
    <source>
    </source>
</evidence>
<evidence type="ECO:0000305" key="3"/>
<evidence type="ECO:0007829" key="4">
    <source>
        <dbReference type="PDB" id="3EF6"/>
    </source>
</evidence>